<gene>
    <name evidence="2" type="primary">mutM</name>
    <name evidence="2" type="synonym">fpg</name>
    <name type="ordered locus">M6_Spy0434</name>
</gene>
<reference key="1">
    <citation type="journal article" date="2004" name="J. Infect. Dis.">
        <title>Progress toward characterization of the group A Streptococcus metagenome: complete genome sequence of a macrolide-resistant serotype M6 strain.</title>
        <authorList>
            <person name="Banks D.J."/>
            <person name="Porcella S.F."/>
            <person name="Barbian K.D."/>
            <person name="Beres S.B."/>
            <person name="Philips L.E."/>
            <person name="Voyich J.M."/>
            <person name="DeLeo F.R."/>
            <person name="Martin J.M."/>
            <person name="Somerville G.A."/>
            <person name="Musser J.M."/>
        </authorList>
    </citation>
    <scope>NUCLEOTIDE SEQUENCE [LARGE SCALE GENOMIC DNA]</scope>
    <source>
        <strain>ATCC BAA-946 / MGAS10394</strain>
    </source>
</reference>
<sequence>MPELPEVETVRRGLKALVLGQEIVAVTLKVPKMVKTDLETFALTLPGQIIQSVGRRGKYLLIDLGQLVLVSHLRMEGKYLLFPDEVPDNKHFHVFFELKNGSTLVYQDVRKFGTFDLIAKSQLSAFFAKRKLGPEPKKETFKLKTFEAVLLSSKKTIKPHLLDQTLVAGLGNIYVDEVLWAAKVHPETASSRLNKAEIKRLHDETIRILALGIEKGGSTVRTYRNTLGADGTMQDYLQVYGQTGKPCPRCGQAIVKLKVGGRGTHICPKCQKKRP</sequence>
<organism>
    <name type="scientific">Streptococcus pyogenes serotype M6 (strain ATCC BAA-946 / MGAS10394)</name>
    <dbReference type="NCBI Taxonomy" id="286636"/>
    <lineage>
        <taxon>Bacteria</taxon>
        <taxon>Bacillati</taxon>
        <taxon>Bacillota</taxon>
        <taxon>Bacilli</taxon>
        <taxon>Lactobacillales</taxon>
        <taxon>Streptococcaceae</taxon>
        <taxon>Streptococcus</taxon>
    </lineage>
</organism>
<evidence type="ECO:0000250" key="1"/>
<evidence type="ECO:0000255" key="2">
    <source>
        <dbReference type="HAMAP-Rule" id="MF_00103"/>
    </source>
</evidence>
<feature type="initiator methionine" description="Removed" evidence="1">
    <location>
        <position position="1"/>
    </location>
</feature>
<feature type="chain" id="PRO_0000170873" description="Formamidopyrimidine-DNA glycosylase">
    <location>
        <begin position="2"/>
        <end position="275"/>
    </location>
</feature>
<feature type="zinc finger region" description="FPG-type" evidence="2">
    <location>
        <begin position="238"/>
        <end position="272"/>
    </location>
</feature>
<feature type="active site" description="Schiff-base intermediate with DNA" evidence="2">
    <location>
        <position position="2"/>
    </location>
</feature>
<feature type="active site" description="Proton donor" evidence="2">
    <location>
        <position position="3"/>
    </location>
</feature>
<feature type="active site" description="Proton donor; for beta-elimination activity" evidence="2">
    <location>
        <position position="58"/>
    </location>
</feature>
<feature type="active site" description="Proton donor; for delta-elimination activity" evidence="2">
    <location>
        <position position="262"/>
    </location>
</feature>
<feature type="binding site" evidence="2">
    <location>
        <position position="91"/>
    </location>
    <ligand>
        <name>DNA</name>
        <dbReference type="ChEBI" id="CHEBI:16991"/>
    </ligand>
</feature>
<feature type="binding site" evidence="2">
    <location>
        <position position="110"/>
    </location>
    <ligand>
        <name>DNA</name>
        <dbReference type="ChEBI" id="CHEBI:16991"/>
    </ligand>
</feature>
<keyword id="KW-0227">DNA damage</keyword>
<keyword id="KW-0234">DNA repair</keyword>
<keyword id="KW-0238">DNA-binding</keyword>
<keyword id="KW-0326">Glycosidase</keyword>
<keyword id="KW-0378">Hydrolase</keyword>
<keyword id="KW-0456">Lyase</keyword>
<keyword id="KW-0479">Metal-binding</keyword>
<keyword id="KW-0511">Multifunctional enzyme</keyword>
<keyword id="KW-0862">Zinc</keyword>
<keyword id="KW-0863">Zinc-finger</keyword>
<comment type="function">
    <text evidence="2">Involved in base excision repair of DNA damaged by oxidation or by mutagenic agents. Acts as a DNA glycosylase that recognizes and removes damaged bases. Has a preference for oxidized purines, such as 7,8-dihydro-8-oxoguanine (8-oxoG). Has AP (apurinic/apyrimidinic) lyase activity and introduces nicks in the DNA strand. Cleaves the DNA backbone by beta-delta elimination to generate a single-strand break at the site of the removed base with both 3'- and 5'-phosphates.</text>
</comment>
<comment type="catalytic activity">
    <reaction evidence="2">
        <text>Hydrolysis of DNA containing ring-opened 7-methylguanine residues, releasing 2,6-diamino-4-hydroxy-5-(N-methyl)formamidopyrimidine.</text>
        <dbReference type="EC" id="3.2.2.23"/>
    </reaction>
</comment>
<comment type="catalytic activity">
    <reaction evidence="2">
        <text>2'-deoxyribonucleotide-(2'-deoxyribose 5'-phosphate)-2'-deoxyribonucleotide-DNA = a 3'-end 2'-deoxyribonucleotide-(2,3-dehydro-2,3-deoxyribose 5'-phosphate)-DNA + a 5'-end 5'-phospho-2'-deoxyribonucleoside-DNA + H(+)</text>
        <dbReference type="Rhea" id="RHEA:66592"/>
        <dbReference type="Rhea" id="RHEA-COMP:13180"/>
        <dbReference type="Rhea" id="RHEA-COMP:16897"/>
        <dbReference type="Rhea" id="RHEA-COMP:17067"/>
        <dbReference type="ChEBI" id="CHEBI:15378"/>
        <dbReference type="ChEBI" id="CHEBI:136412"/>
        <dbReference type="ChEBI" id="CHEBI:157695"/>
        <dbReference type="ChEBI" id="CHEBI:167181"/>
        <dbReference type="EC" id="4.2.99.18"/>
    </reaction>
</comment>
<comment type="cofactor">
    <cofactor evidence="2">
        <name>Zn(2+)</name>
        <dbReference type="ChEBI" id="CHEBI:29105"/>
    </cofactor>
    <text evidence="2">Binds 1 zinc ion per subunit.</text>
</comment>
<comment type="subunit">
    <text evidence="2">Monomer.</text>
</comment>
<comment type="similarity">
    <text evidence="2">Belongs to the FPG family.</text>
</comment>
<protein>
    <recommendedName>
        <fullName evidence="2">Formamidopyrimidine-DNA glycosylase</fullName>
        <shortName evidence="2">Fapy-DNA glycosylase</shortName>
        <ecNumber evidence="2">3.2.2.23</ecNumber>
    </recommendedName>
    <alternativeName>
        <fullName evidence="2">DNA-(apurinic or apyrimidinic site) lyase MutM</fullName>
        <shortName evidence="2">AP lyase MutM</shortName>
        <ecNumber evidence="2">4.2.99.18</ecNumber>
    </alternativeName>
</protein>
<proteinExistence type="inferred from homology"/>
<accession>Q5XDE4</accession>
<dbReference type="EC" id="3.2.2.23" evidence="2"/>
<dbReference type="EC" id="4.2.99.18" evidence="2"/>
<dbReference type="EMBL" id="CP000003">
    <property type="protein sequence ID" value="AAT86569.1"/>
    <property type="molecule type" value="Genomic_DNA"/>
</dbReference>
<dbReference type="RefSeq" id="WP_011184267.1">
    <property type="nucleotide sequence ID" value="NC_006086.1"/>
</dbReference>
<dbReference type="SMR" id="Q5XDE4"/>
<dbReference type="KEGG" id="spa:M6_Spy0434"/>
<dbReference type="HOGENOM" id="CLU_038423_1_2_9"/>
<dbReference type="Proteomes" id="UP000001167">
    <property type="component" value="Chromosome"/>
</dbReference>
<dbReference type="GO" id="GO:0034039">
    <property type="term" value="F:8-oxo-7,8-dihydroguanine DNA N-glycosylase activity"/>
    <property type="evidence" value="ECO:0007669"/>
    <property type="project" value="TreeGrafter"/>
</dbReference>
<dbReference type="GO" id="GO:0140078">
    <property type="term" value="F:class I DNA-(apurinic or apyrimidinic site) endonuclease activity"/>
    <property type="evidence" value="ECO:0007669"/>
    <property type="project" value="UniProtKB-EC"/>
</dbReference>
<dbReference type="GO" id="GO:0003684">
    <property type="term" value="F:damaged DNA binding"/>
    <property type="evidence" value="ECO:0007669"/>
    <property type="project" value="InterPro"/>
</dbReference>
<dbReference type="GO" id="GO:0008270">
    <property type="term" value="F:zinc ion binding"/>
    <property type="evidence" value="ECO:0007669"/>
    <property type="project" value="UniProtKB-UniRule"/>
</dbReference>
<dbReference type="GO" id="GO:0006284">
    <property type="term" value="P:base-excision repair"/>
    <property type="evidence" value="ECO:0007669"/>
    <property type="project" value="InterPro"/>
</dbReference>
<dbReference type="CDD" id="cd08966">
    <property type="entry name" value="EcFpg-like_N"/>
    <property type="match status" value="1"/>
</dbReference>
<dbReference type="FunFam" id="1.10.8.50:FF:000003">
    <property type="entry name" value="Formamidopyrimidine-DNA glycosylase"/>
    <property type="match status" value="1"/>
</dbReference>
<dbReference type="FunFam" id="3.20.190.10:FF:000001">
    <property type="entry name" value="Formamidopyrimidine-DNA glycosylase"/>
    <property type="match status" value="1"/>
</dbReference>
<dbReference type="Gene3D" id="1.10.8.50">
    <property type="match status" value="1"/>
</dbReference>
<dbReference type="Gene3D" id="3.20.190.10">
    <property type="entry name" value="MutM-like, N-terminal"/>
    <property type="match status" value="1"/>
</dbReference>
<dbReference type="HAMAP" id="MF_00103">
    <property type="entry name" value="Fapy_DNA_glycosyl"/>
    <property type="match status" value="1"/>
</dbReference>
<dbReference type="InterPro" id="IPR015886">
    <property type="entry name" value="DNA_glyclase/AP_lyase_DNA-bd"/>
</dbReference>
<dbReference type="InterPro" id="IPR015887">
    <property type="entry name" value="DNA_glyclase_Znf_dom_DNA_BS"/>
</dbReference>
<dbReference type="InterPro" id="IPR020629">
    <property type="entry name" value="Formamido-pyr_DNA_Glyclase"/>
</dbReference>
<dbReference type="InterPro" id="IPR012319">
    <property type="entry name" value="FPG_cat"/>
</dbReference>
<dbReference type="InterPro" id="IPR035937">
    <property type="entry name" value="MutM-like_N-ter"/>
</dbReference>
<dbReference type="InterPro" id="IPR010979">
    <property type="entry name" value="Ribosomal_uS13-like_H2TH"/>
</dbReference>
<dbReference type="InterPro" id="IPR000214">
    <property type="entry name" value="Znf_DNA_glyclase/AP_lyase"/>
</dbReference>
<dbReference type="InterPro" id="IPR010663">
    <property type="entry name" value="Znf_FPG/IleRS"/>
</dbReference>
<dbReference type="NCBIfam" id="TIGR00577">
    <property type="entry name" value="fpg"/>
    <property type="match status" value="1"/>
</dbReference>
<dbReference type="NCBIfam" id="NF002211">
    <property type="entry name" value="PRK01103.1"/>
    <property type="match status" value="1"/>
</dbReference>
<dbReference type="PANTHER" id="PTHR22993">
    <property type="entry name" value="FORMAMIDOPYRIMIDINE-DNA GLYCOSYLASE"/>
    <property type="match status" value="1"/>
</dbReference>
<dbReference type="PANTHER" id="PTHR22993:SF9">
    <property type="entry name" value="FORMAMIDOPYRIMIDINE-DNA GLYCOSYLASE"/>
    <property type="match status" value="1"/>
</dbReference>
<dbReference type="Pfam" id="PF01149">
    <property type="entry name" value="Fapy_DNA_glyco"/>
    <property type="match status" value="1"/>
</dbReference>
<dbReference type="Pfam" id="PF06831">
    <property type="entry name" value="H2TH"/>
    <property type="match status" value="1"/>
</dbReference>
<dbReference type="Pfam" id="PF06827">
    <property type="entry name" value="zf-FPG_IleRS"/>
    <property type="match status" value="1"/>
</dbReference>
<dbReference type="SMART" id="SM00898">
    <property type="entry name" value="Fapy_DNA_glyco"/>
    <property type="match status" value="1"/>
</dbReference>
<dbReference type="SMART" id="SM01232">
    <property type="entry name" value="H2TH"/>
    <property type="match status" value="1"/>
</dbReference>
<dbReference type="SUPFAM" id="SSF57716">
    <property type="entry name" value="Glucocorticoid receptor-like (DNA-binding domain)"/>
    <property type="match status" value="1"/>
</dbReference>
<dbReference type="SUPFAM" id="SSF81624">
    <property type="entry name" value="N-terminal domain of MutM-like DNA repair proteins"/>
    <property type="match status" value="1"/>
</dbReference>
<dbReference type="SUPFAM" id="SSF46946">
    <property type="entry name" value="S13-like H2TH domain"/>
    <property type="match status" value="1"/>
</dbReference>
<dbReference type="PROSITE" id="PS51068">
    <property type="entry name" value="FPG_CAT"/>
    <property type="match status" value="1"/>
</dbReference>
<dbReference type="PROSITE" id="PS01242">
    <property type="entry name" value="ZF_FPG_1"/>
    <property type="match status" value="1"/>
</dbReference>
<dbReference type="PROSITE" id="PS51066">
    <property type="entry name" value="ZF_FPG_2"/>
    <property type="match status" value="1"/>
</dbReference>
<name>FPG_STRP6</name>